<protein>
    <recommendedName>
        <fullName>ATP-dependent RNA helicase DBP9</fullName>
        <ecNumber>3.6.4.13</ecNumber>
    </recommendedName>
</protein>
<organism>
    <name type="scientific">Lodderomyces elongisporus (strain ATCC 11503 / CBS 2605 / JCM 1781 / NBRC 1676 / NRRL YB-4239)</name>
    <name type="common">Yeast</name>
    <name type="synonym">Saccharomyces elongisporus</name>
    <dbReference type="NCBI Taxonomy" id="379508"/>
    <lineage>
        <taxon>Eukaryota</taxon>
        <taxon>Fungi</taxon>
        <taxon>Dikarya</taxon>
        <taxon>Ascomycota</taxon>
        <taxon>Saccharomycotina</taxon>
        <taxon>Pichiomycetes</taxon>
        <taxon>Debaryomycetaceae</taxon>
        <taxon>Candida/Lodderomyces clade</taxon>
        <taxon>Lodderomyces</taxon>
    </lineage>
</organism>
<comment type="function">
    <text evidence="1">ATP-binding RNA helicase involved in the biogenesis of 60S ribosomal subunits and is required for the normal formation of 25S and 5.8S rRNAs.</text>
</comment>
<comment type="catalytic activity">
    <reaction>
        <text>ATP + H2O = ADP + phosphate + H(+)</text>
        <dbReference type="Rhea" id="RHEA:13065"/>
        <dbReference type="ChEBI" id="CHEBI:15377"/>
        <dbReference type="ChEBI" id="CHEBI:15378"/>
        <dbReference type="ChEBI" id="CHEBI:30616"/>
        <dbReference type="ChEBI" id="CHEBI:43474"/>
        <dbReference type="ChEBI" id="CHEBI:456216"/>
        <dbReference type="EC" id="3.6.4.13"/>
    </reaction>
</comment>
<comment type="subcellular location">
    <subcellularLocation>
        <location evidence="1">Nucleus</location>
        <location evidence="1">Nucleolus</location>
    </subcellularLocation>
</comment>
<comment type="domain">
    <text>The Q motif is unique to and characteristic of the DEAD box family of RNA helicases and controls ATP binding and hydrolysis.</text>
</comment>
<comment type="similarity">
    <text evidence="5">Belongs to the DEAD box helicase family. DDX56/DBP9 subfamily.</text>
</comment>
<gene>
    <name type="primary">DBP9</name>
    <name type="ORF">LELG_04761</name>
</gene>
<evidence type="ECO:0000250" key="1"/>
<evidence type="ECO:0000255" key="2">
    <source>
        <dbReference type="PROSITE-ProRule" id="PRU00541"/>
    </source>
</evidence>
<evidence type="ECO:0000255" key="3">
    <source>
        <dbReference type="PROSITE-ProRule" id="PRU00542"/>
    </source>
</evidence>
<evidence type="ECO:0000256" key="4">
    <source>
        <dbReference type="SAM" id="MobiDB-lite"/>
    </source>
</evidence>
<evidence type="ECO:0000305" key="5"/>
<dbReference type="EC" id="3.6.4.13"/>
<dbReference type="EMBL" id="CH981530">
    <property type="protein sequence ID" value="EDK46580.1"/>
    <property type="molecule type" value="Genomic_DNA"/>
</dbReference>
<dbReference type="RefSeq" id="XP_001523948.1">
    <property type="nucleotide sequence ID" value="XM_001523898.1"/>
</dbReference>
<dbReference type="SMR" id="A5E572"/>
<dbReference type="FunCoup" id="A5E572">
    <property type="interactions" value="968"/>
</dbReference>
<dbReference type="STRING" id="379508.A5E572"/>
<dbReference type="GeneID" id="5231059"/>
<dbReference type="KEGG" id="lel:PVL30_005495"/>
<dbReference type="VEuPathDB" id="FungiDB:LELG_04761"/>
<dbReference type="eggNOG" id="KOG0346">
    <property type="taxonomic scope" value="Eukaryota"/>
</dbReference>
<dbReference type="HOGENOM" id="CLU_003041_17_1_1"/>
<dbReference type="InParanoid" id="A5E572"/>
<dbReference type="OMA" id="NASEQCV"/>
<dbReference type="OrthoDB" id="1191041at2759"/>
<dbReference type="Proteomes" id="UP000001996">
    <property type="component" value="Unassembled WGS sequence"/>
</dbReference>
<dbReference type="GO" id="GO:0005829">
    <property type="term" value="C:cytosol"/>
    <property type="evidence" value="ECO:0007669"/>
    <property type="project" value="TreeGrafter"/>
</dbReference>
<dbReference type="GO" id="GO:0005730">
    <property type="term" value="C:nucleolus"/>
    <property type="evidence" value="ECO:0007669"/>
    <property type="project" value="UniProtKB-SubCell"/>
</dbReference>
<dbReference type="GO" id="GO:0005524">
    <property type="term" value="F:ATP binding"/>
    <property type="evidence" value="ECO:0007669"/>
    <property type="project" value="UniProtKB-KW"/>
</dbReference>
<dbReference type="GO" id="GO:0016887">
    <property type="term" value="F:ATP hydrolysis activity"/>
    <property type="evidence" value="ECO:0007669"/>
    <property type="project" value="RHEA"/>
</dbReference>
<dbReference type="GO" id="GO:0003678">
    <property type="term" value="F:DNA helicase activity"/>
    <property type="evidence" value="ECO:0007669"/>
    <property type="project" value="EnsemblFungi"/>
</dbReference>
<dbReference type="GO" id="GO:0033677">
    <property type="term" value="F:DNA/RNA helicase activity"/>
    <property type="evidence" value="ECO:0007669"/>
    <property type="project" value="EnsemblFungi"/>
</dbReference>
<dbReference type="GO" id="GO:0003723">
    <property type="term" value="F:RNA binding"/>
    <property type="evidence" value="ECO:0007669"/>
    <property type="project" value="UniProtKB-KW"/>
</dbReference>
<dbReference type="GO" id="GO:0003724">
    <property type="term" value="F:RNA helicase activity"/>
    <property type="evidence" value="ECO:0007669"/>
    <property type="project" value="UniProtKB-EC"/>
</dbReference>
<dbReference type="GO" id="GO:0000463">
    <property type="term" value="P:maturation of LSU-rRNA from tricistronic rRNA transcript (SSU-rRNA, 5.8S rRNA, LSU-rRNA)"/>
    <property type="evidence" value="ECO:0007669"/>
    <property type="project" value="EnsemblFungi"/>
</dbReference>
<dbReference type="CDD" id="cd17961">
    <property type="entry name" value="DEADc_DDX56"/>
    <property type="match status" value="1"/>
</dbReference>
<dbReference type="CDD" id="cd18787">
    <property type="entry name" value="SF2_C_DEAD"/>
    <property type="match status" value="1"/>
</dbReference>
<dbReference type="Gene3D" id="3.40.50.300">
    <property type="entry name" value="P-loop containing nucleotide triphosphate hydrolases"/>
    <property type="match status" value="2"/>
</dbReference>
<dbReference type="InterPro" id="IPR011545">
    <property type="entry name" value="DEAD/DEAH_box_helicase_dom"/>
</dbReference>
<dbReference type="InterPro" id="IPR050079">
    <property type="entry name" value="DEAD_box_RNA_helicase"/>
</dbReference>
<dbReference type="InterPro" id="IPR014001">
    <property type="entry name" value="Helicase_ATP-bd"/>
</dbReference>
<dbReference type="InterPro" id="IPR001650">
    <property type="entry name" value="Helicase_C-like"/>
</dbReference>
<dbReference type="InterPro" id="IPR027417">
    <property type="entry name" value="P-loop_NTPase"/>
</dbReference>
<dbReference type="InterPro" id="IPR014014">
    <property type="entry name" value="RNA_helicase_DEAD_Q_motif"/>
</dbReference>
<dbReference type="PANTHER" id="PTHR47959">
    <property type="entry name" value="ATP-DEPENDENT RNA HELICASE RHLE-RELATED"/>
    <property type="match status" value="1"/>
</dbReference>
<dbReference type="PANTHER" id="PTHR47959:SF21">
    <property type="entry name" value="DEAD-BOX HELICASE 56"/>
    <property type="match status" value="1"/>
</dbReference>
<dbReference type="Pfam" id="PF00270">
    <property type="entry name" value="DEAD"/>
    <property type="match status" value="1"/>
</dbReference>
<dbReference type="Pfam" id="PF00271">
    <property type="entry name" value="Helicase_C"/>
    <property type="match status" value="2"/>
</dbReference>
<dbReference type="SMART" id="SM00487">
    <property type="entry name" value="DEXDc"/>
    <property type="match status" value="1"/>
</dbReference>
<dbReference type="SMART" id="SM00490">
    <property type="entry name" value="HELICc"/>
    <property type="match status" value="1"/>
</dbReference>
<dbReference type="SUPFAM" id="SSF52540">
    <property type="entry name" value="P-loop containing nucleoside triphosphate hydrolases"/>
    <property type="match status" value="2"/>
</dbReference>
<dbReference type="PROSITE" id="PS51192">
    <property type="entry name" value="HELICASE_ATP_BIND_1"/>
    <property type="match status" value="1"/>
</dbReference>
<dbReference type="PROSITE" id="PS51194">
    <property type="entry name" value="HELICASE_CTER"/>
    <property type="match status" value="1"/>
</dbReference>
<dbReference type="PROSITE" id="PS51195">
    <property type="entry name" value="Q_MOTIF"/>
    <property type="match status" value="1"/>
</dbReference>
<feature type="chain" id="PRO_0000294670" description="ATP-dependent RNA helicase DBP9">
    <location>
        <begin position="1"/>
        <end position="606"/>
    </location>
</feature>
<feature type="domain" description="Helicase ATP-binding" evidence="2">
    <location>
        <begin position="52"/>
        <end position="232"/>
    </location>
</feature>
<feature type="domain" description="Helicase C-terminal" evidence="3">
    <location>
        <begin position="261"/>
        <end position="488"/>
    </location>
</feature>
<feature type="region of interest" description="Disordered" evidence="4">
    <location>
        <begin position="336"/>
        <end position="397"/>
    </location>
</feature>
<feature type="region of interest" description="Disordered" evidence="4">
    <location>
        <begin position="586"/>
        <end position="606"/>
    </location>
</feature>
<feature type="short sequence motif" description="Q motif">
    <location>
        <begin position="20"/>
        <end position="48"/>
    </location>
</feature>
<feature type="short sequence motif" description="DEAD box">
    <location>
        <begin position="178"/>
        <end position="181"/>
    </location>
</feature>
<feature type="compositionally biased region" description="Acidic residues" evidence="4">
    <location>
        <begin position="336"/>
        <end position="352"/>
    </location>
</feature>
<feature type="compositionally biased region" description="Low complexity" evidence="4">
    <location>
        <begin position="359"/>
        <end position="370"/>
    </location>
</feature>
<feature type="compositionally biased region" description="Basic and acidic residues" evidence="4">
    <location>
        <begin position="371"/>
        <end position="382"/>
    </location>
</feature>
<feature type="compositionally biased region" description="Basic residues" evidence="4">
    <location>
        <begin position="586"/>
        <end position="596"/>
    </location>
</feature>
<feature type="compositionally biased region" description="Basic and acidic residues" evidence="4">
    <location>
        <begin position="597"/>
        <end position="606"/>
    </location>
</feature>
<feature type="binding site" evidence="2">
    <location>
        <begin position="65"/>
        <end position="72"/>
    </location>
    <ligand>
        <name>ATP</name>
        <dbReference type="ChEBI" id="CHEBI:30616"/>
    </ligand>
</feature>
<proteinExistence type="inferred from homology"/>
<name>DBP9_LODEL</name>
<keyword id="KW-0067">ATP-binding</keyword>
<keyword id="KW-0347">Helicase</keyword>
<keyword id="KW-0378">Hydrolase</keyword>
<keyword id="KW-0547">Nucleotide-binding</keyword>
<keyword id="KW-0539">Nucleus</keyword>
<keyword id="KW-1185">Reference proteome</keyword>
<keyword id="KW-0690">Ribosome biogenesis</keyword>
<keyword id="KW-0694">RNA-binding</keyword>
<keyword id="KW-0698">rRNA processing</keyword>
<reference key="1">
    <citation type="journal article" date="2009" name="Nature">
        <title>Evolution of pathogenicity and sexual reproduction in eight Candida genomes.</title>
        <authorList>
            <person name="Butler G."/>
            <person name="Rasmussen M.D."/>
            <person name="Lin M.F."/>
            <person name="Santos M.A.S."/>
            <person name="Sakthikumar S."/>
            <person name="Munro C.A."/>
            <person name="Rheinbay E."/>
            <person name="Grabherr M."/>
            <person name="Forche A."/>
            <person name="Reedy J.L."/>
            <person name="Agrafioti I."/>
            <person name="Arnaud M.B."/>
            <person name="Bates S."/>
            <person name="Brown A.J.P."/>
            <person name="Brunke S."/>
            <person name="Costanzo M.C."/>
            <person name="Fitzpatrick D.A."/>
            <person name="de Groot P.W.J."/>
            <person name="Harris D."/>
            <person name="Hoyer L.L."/>
            <person name="Hube B."/>
            <person name="Klis F.M."/>
            <person name="Kodira C."/>
            <person name="Lennard N."/>
            <person name="Logue M.E."/>
            <person name="Martin R."/>
            <person name="Neiman A.M."/>
            <person name="Nikolaou E."/>
            <person name="Quail M.A."/>
            <person name="Quinn J."/>
            <person name="Santos M.C."/>
            <person name="Schmitzberger F.F."/>
            <person name="Sherlock G."/>
            <person name="Shah P."/>
            <person name="Silverstein K.A.T."/>
            <person name="Skrzypek M.S."/>
            <person name="Soll D."/>
            <person name="Staggs R."/>
            <person name="Stansfield I."/>
            <person name="Stumpf M.P.H."/>
            <person name="Sudbery P.E."/>
            <person name="Srikantha T."/>
            <person name="Zeng Q."/>
            <person name="Berman J."/>
            <person name="Berriman M."/>
            <person name="Heitman J."/>
            <person name="Gow N.A.R."/>
            <person name="Lorenz M.C."/>
            <person name="Birren B.W."/>
            <person name="Kellis M."/>
            <person name="Cuomo C.A."/>
        </authorList>
    </citation>
    <scope>NUCLEOTIDE SEQUENCE [LARGE SCALE GENOMIC DNA]</scope>
    <source>
        <strain>ATCC 11503 / BCRC 21390 / CBS 2605 / JCM 1781 / NBRC 1676 / NRRL YB-4239</strain>
    </source>
</reference>
<accession>A5E572</accession>
<sequence length="606" mass="69234">MSLKSTKTTAASETYLDDETTWDSLNLDPRLLQAIDKLGFENPTLIQSSAIPLALEEKRDIIAKASTGSGKTAAYAIPIIQNIMVQGSQLGTQSVVLVPTRELSNQVYQFMEQLIKFSNNKIGILNLSSNYSDQVLKSLLINKPEIIISTPSKLIQTLEAHEGKDIIDLSTVKNLTIDEVDLILSFGYKDDLQKLESYLPVKKNLQTFLMSATVNDDLNELKAKFCTKPAILKLDDDQSNNNKLVQFYAKTTEFDKFLLSYVIFKLNLIKGKTIVFVNNIDRGYRLKLFLEQFGIRCCILNSELPINSRLHIVEEFNKNVYHLLIATDDISVEKEEVDEVDEGEEEHEDAADADEKKQQNNNNNNNNHNNNNKEHKEVLKKNEKNKKHSSKKDKEYGVSRGVDFRNVACVLNFDLPTTSKSYVHRVGRTARAGKSGMALSFVIPEKEVGKHKTASLRSAKKDEKVLNRIVKQQQKNGFEIKPYQFDMKQVEGFRYRADDAFRAVTQTAIREARVKELKNELINSEKLKRFFQENPRDLASLRHDKELHPARVQAHLKRTPQYLLPESARLDVKNLGFIPFHKNKVGKYRKKSKGTKKRDPLKSFKK</sequence>